<organism>
    <name type="scientific">Bos taurus</name>
    <name type="common">Bovine</name>
    <dbReference type="NCBI Taxonomy" id="9913"/>
    <lineage>
        <taxon>Eukaryota</taxon>
        <taxon>Metazoa</taxon>
        <taxon>Chordata</taxon>
        <taxon>Craniata</taxon>
        <taxon>Vertebrata</taxon>
        <taxon>Euteleostomi</taxon>
        <taxon>Mammalia</taxon>
        <taxon>Eutheria</taxon>
        <taxon>Laurasiatheria</taxon>
        <taxon>Artiodactyla</taxon>
        <taxon>Ruminantia</taxon>
        <taxon>Pecora</taxon>
        <taxon>Bovidae</taxon>
        <taxon>Bovinae</taxon>
        <taxon>Bos</taxon>
    </lineage>
</organism>
<evidence type="ECO:0000250" key="1">
    <source>
        <dbReference type="UniProtKB" id="D4A2B7"/>
    </source>
</evidence>
<evidence type="ECO:0000250" key="2">
    <source>
        <dbReference type="UniProtKB" id="P32794"/>
    </source>
</evidence>
<evidence type="ECO:0000250" key="3">
    <source>
        <dbReference type="UniProtKB" id="Q9BVQ7"/>
    </source>
</evidence>
<evidence type="ECO:0000255" key="4"/>
<evidence type="ECO:0000305" key="5"/>
<proteinExistence type="evidence at transcript level"/>
<protein>
    <recommendedName>
        <fullName>ATPase family gene 2 protein homolog B</fullName>
        <ecNumber evidence="2">3.6.4.10</ecNumber>
    </recommendedName>
    <alternativeName>
        <fullName>AFG2 AAA ATPase homolog B</fullName>
    </alternativeName>
    <alternativeName>
        <fullName evidence="5">Ribosome biogenesis protein SPATA5L1</fullName>
    </alternativeName>
    <alternativeName>
        <fullName>Spermatogenesis-associated protein 5-like protein 1</fullName>
    </alternativeName>
</protein>
<comment type="function">
    <text evidence="3">ATP-dependent chaperone part of the 55LCC heterohexameric ATPase complex which is chromatin-associated and promotes replisome proteostasis to maintain replication fork progression and genome stability. Required for replication fork progression, sister chromatid cohesion, and chromosome stability. The ATPase activity is specifically enhanced by replication fork DNA and is coupled to cysteine protease-dependent cleavage of replisome substrates in response to replication fork damage. Uses ATPase activity to process replisome substrates in S-phase, facilitating their proteolytic turnover from chromatin to ensure DNA replication and mitotic fidelity. Plays an essential role in the cytoplasmic maturation steps of pre-60S ribosomal particles by promoting the release of shuttling protein RSL24D1/RLP24 from the pre-ribosomal particles.</text>
</comment>
<comment type="catalytic activity">
    <reaction evidence="2">
        <text>ATP + H2O = ADP + phosphate + H(+)</text>
        <dbReference type="Rhea" id="RHEA:13065"/>
        <dbReference type="ChEBI" id="CHEBI:15377"/>
        <dbReference type="ChEBI" id="CHEBI:15378"/>
        <dbReference type="ChEBI" id="CHEBI:30616"/>
        <dbReference type="ChEBI" id="CHEBI:43474"/>
        <dbReference type="ChEBI" id="CHEBI:456216"/>
        <dbReference type="EC" id="3.6.4.10"/>
    </reaction>
</comment>
<comment type="activity regulation">
    <text evidence="3">In the context of 55LCC heterohexameric ATPase complex, the ATPase activity is stimulated by DNA binding and inhibited in presence of RNA.</text>
</comment>
<comment type="subunit">
    <text evidence="3">Part of the 55LCC heterohexameric ATPase complex composed at least of AIRIM, AFG2A, AFG2B and CINP. Associates with pre-60S ribosomal particles.</text>
</comment>
<comment type="subcellular location">
    <subcellularLocation>
        <location evidence="3">Cytoplasm</location>
    </subcellularLocation>
    <subcellularLocation>
        <location evidence="3">Cytoplasm</location>
        <location evidence="3">Cytoskeleton</location>
        <location evidence="3">Spindle</location>
    </subcellularLocation>
    <subcellularLocation>
        <location evidence="1">Nucleus</location>
    </subcellularLocation>
</comment>
<comment type="similarity">
    <text evidence="5">Belongs to the AAA ATPase family. AFG2 subfamily.</text>
</comment>
<dbReference type="EC" id="3.6.4.10" evidence="2"/>
<dbReference type="EMBL" id="BC114696">
    <property type="protein sequence ID" value="AAI14697.1"/>
    <property type="molecule type" value="mRNA"/>
</dbReference>
<dbReference type="RefSeq" id="NP_001099095.1">
    <property type="nucleotide sequence ID" value="NM_001105625.1"/>
</dbReference>
<dbReference type="SMR" id="A7YSY2"/>
<dbReference type="FunCoup" id="A7YSY2">
    <property type="interactions" value="1483"/>
</dbReference>
<dbReference type="STRING" id="9913.ENSBTAP00000024327"/>
<dbReference type="PaxDb" id="9913-ENSBTAP00000024327"/>
<dbReference type="Ensembl" id="ENSBTAT00000024327.7">
    <property type="protein sequence ID" value="ENSBTAP00000024327.5"/>
    <property type="gene ID" value="ENSBTAG00000018279.7"/>
</dbReference>
<dbReference type="GeneID" id="533070"/>
<dbReference type="KEGG" id="bta:533070"/>
<dbReference type="CTD" id="533070"/>
<dbReference type="VEuPathDB" id="HostDB:ENSBTAG00000018279"/>
<dbReference type="VGNC" id="VGNC:35188">
    <property type="gene designation" value="AFG2B"/>
</dbReference>
<dbReference type="eggNOG" id="KOG0730">
    <property type="taxonomic scope" value="Eukaryota"/>
</dbReference>
<dbReference type="GeneTree" id="ENSGT00940000160700"/>
<dbReference type="HOGENOM" id="CLU_000688_12_2_1"/>
<dbReference type="InParanoid" id="A7YSY2"/>
<dbReference type="OMA" id="DRHIYVA"/>
<dbReference type="OrthoDB" id="27435at2759"/>
<dbReference type="TreeFam" id="TF325792"/>
<dbReference type="Proteomes" id="UP000009136">
    <property type="component" value="Chromosome 10"/>
</dbReference>
<dbReference type="Bgee" id="ENSBTAG00000018279">
    <property type="expression patterns" value="Expressed in tongue muscle and 106 other cell types or tissues"/>
</dbReference>
<dbReference type="GO" id="GO:0005737">
    <property type="term" value="C:cytoplasm"/>
    <property type="evidence" value="ECO:0000250"/>
    <property type="project" value="UniProtKB"/>
</dbReference>
<dbReference type="GO" id="GO:0005829">
    <property type="term" value="C:cytosol"/>
    <property type="evidence" value="ECO:0000318"/>
    <property type="project" value="GO_Central"/>
</dbReference>
<dbReference type="GO" id="GO:0005634">
    <property type="term" value="C:nucleus"/>
    <property type="evidence" value="ECO:0000318"/>
    <property type="project" value="GO_Central"/>
</dbReference>
<dbReference type="GO" id="GO:0005819">
    <property type="term" value="C:spindle"/>
    <property type="evidence" value="ECO:0000250"/>
    <property type="project" value="UniProtKB"/>
</dbReference>
<dbReference type="GO" id="GO:0034098">
    <property type="term" value="C:VCP-NPL4-UFD1 AAA ATPase complex"/>
    <property type="evidence" value="ECO:0000318"/>
    <property type="project" value="GO_Central"/>
</dbReference>
<dbReference type="GO" id="GO:0005524">
    <property type="term" value="F:ATP binding"/>
    <property type="evidence" value="ECO:0007669"/>
    <property type="project" value="UniProtKB-KW"/>
</dbReference>
<dbReference type="GO" id="GO:0016887">
    <property type="term" value="F:ATP hydrolysis activity"/>
    <property type="evidence" value="ECO:0000318"/>
    <property type="project" value="GO_Central"/>
</dbReference>
<dbReference type="GO" id="GO:0042802">
    <property type="term" value="F:identical protein binding"/>
    <property type="evidence" value="ECO:0007669"/>
    <property type="project" value="Ensembl"/>
</dbReference>
<dbReference type="GO" id="GO:0031593">
    <property type="term" value="F:polyubiquitin modification-dependent protein binding"/>
    <property type="evidence" value="ECO:0000318"/>
    <property type="project" value="GO_Central"/>
</dbReference>
<dbReference type="GO" id="GO:1990275">
    <property type="term" value="F:preribosome binding"/>
    <property type="evidence" value="ECO:0000250"/>
    <property type="project" value="UniProtKB"/>
</dbReference>
<dbReference type="GO" id="GO:0097352">
    <property type="term" value="P:autophagosome maturation"/>
    <property type="evidence" value="ECO:0000318"/>
    <property type="project" value="GO_Central"/>
</dbReference>
<dbReference type="GO" id="GO:0051228">
    <property type="term" value="P:mitotic spindle disassembly"/>
    <property type="evidence" value="ECO:0000318"/>
    <property type="project" value="GO_Central"/>
</dbReference>
<dbReference type="GO" id="GO:0043161">
    <property type="term" value="P:proteasome-mediated ubiquitin-dependent protein catabolic process"/>
    <property type="evidence" value="ECO:0000318"/>
    <property type="project" value="GO_Central"/>
</dbReference>
<dbReference type="GO" id="GO:0030970">
    <property type="term" value="P:retrograde protein transport, ER to cytosol"/>
    <property type="evidence" value="ECO:0000318"/>
    <property type="project" value="GO_Central"/>
</dbReference>
<dbReference type="GO" id="GO:0042273">
    <property type="term" value="P:ribosomal large subunit biogenesis"/>
    <property type="evidence" value="ECO:0000250"/>
    <property type="project" value="UniProtKB"/>
</dbReference>
<dbReference type="FunFam" id="1.10.8.60:FF:000075">
    <property type="entry name" value="Spermatogenesis-associated protein 5-like protein 1"/>
    <property type="match status" value="1"/>
</dbReference>
<dbReference type="FunFam" id="3.40.50.300:FF:001081">
    <property type="entry name" value="Spermatogenesis-associated protein 5-like protein 1"/>
    <property type="match status" value="1"/>
</dbReference>
<dbReference type="FunFam" id="1.10.8.60:FF:000038">
    <property type="entry name" value="spermatogenesis-associated protein 5-like protein 1"/>
    <property type="match status" value="1"/>
</dbReference>
<dbReference type="FunFam" id="3.40.50.300:FF:001161">
    <property type="entry name" value="spermatogenesis-associated protein 5-like protein 1"/>
    <property type="match status" value="1"/>
</dbReference>
<dbReference type="Gene3D" id="1.10.8.60">
    <property type="match status" value="2"/>
</dbReference>
<dbReference type="Gene3D" id="3.40.50.300">
    <property type="entry name" value="P-loop containing nucleotide triphosphate hydrolases"/>
    <property type="match status" value="2"/>
</dbReference>
<dbReference type="InterPro" id="IPR003593">
    <property type="entry name" value="AAA+_ATPase"/>
</dbReference>
<dbReference type="InterPro" id="IPR050168">
    <property type="entry name" value="AAA_ATPase_domain"/>
</dbReference>
<dbReference type="InterPro" id="IPR041569">
    <property type="entry name" value="AAA_lid_3"/>
</dbReference>
<dbReference type="InterPro" id="IPR003959">
    <property type="entry name" value="ATPase_AAA_core"/>
</dbReference>
<dbReference type="InterPro" id="IPR003960">
    <property type="entry name" value="ATPase_AAA_CS"/>
</dbReference>
<dbReference type="InterPro" id="IPR027417">
    <property type="entry name" value="P-loop_NTPase"/>
</dbReference>
<dbReference type="PANTHER" id="PTHR23077">
    <property type="entry name" value="AAA-FAMILY ATPASE"/>
    <property type="match status" value="1"/>
</dbReference>
<dbReference type="PANTHER" id="PTHR23077:SF194">
    <property type="entry name" value="ATPASE FAMILY GENE 2 PROTEIN HOMOLOG B"/>
    <property type="match status" value="1"/>
</dbReference>
<dbReference type="Pfam" id="PF00004">
    <property type="entry name" value="AAA"/>
    <property type="match status" value="2"/>
</dbReference>
<dbReference type="Pfam" id="PF17862">
    <property type="entry name" value="AAA_lid_3"/>
    <property type="match status" value="2"/>
</dbReference>
<dbReference type="SMART" id="SM00382">
    <property type="entry name" value="AAA"/>
    <property type="match status" value="2"/>
</dbReference>
<dbReference type="SUPFAM" id="SSF52540">
    <property type="entry name" value="P-loop containing nucleoside triphosphate hydrolases"/>
    <property type="match status" value="2"/>
</dbReference>
<dbReference type="PROSITE" id="PS00674">
    <property type="entry name" value="AAA"/>
    <property type="match status" value="1"/>
</dbReference>
<keyword id="KW-0007">Acetylation</keyword>
<keyword id="KW-0067">ATP-binding</keyword>
<keyword id="KW-0963">Cytoplasm</keyword>
<keyword id="KW-0206">Cytoskeleton</keyword>
<keyword id="KW-0378">Hydrolase</keyword>
<keyword id="KW-0547">Nucleotide-binding</keyword>
<keyword id="KW-0539">Nucleus</keyword>
<keyword id="KW-1185">Reference proteome</keyword>
<keyword id="KW-0677">Repeat</keyword>
<keyword id="KW-0690">Ribosome biogenesis</keyword>
<reference key="1">
    <citation type="submission" date="2006-04" db="EMBL/GenBank/DDBJ databases">
        <authorList>
            <consortium name="NIH - Mammalian Gene Collection (MGC) project"/>
        </authorList>
    </citation>
    <scope>NUCLEOTIDE SEQUENCE [LARGE SCALE MRNA]</scope>
    <source>
        <strain>Hereford</strain>
        <tissue>Uterus</tissue>
    </source>
</reference>
<sequence length="767" mass="82554">MAPDSGSFPEGPPLKLLPVDTRDRGTQRCRLGPTALRALGAHLGSAVKISLPDGGSCLCTAWPRRDGADGFVQLDPQCTSPGSAVGAPGSGGIINLNRLRLVPCPPLRSLAVWPELREQAGASGAPSPAAVLEAVQELLRNRPVSQGYVVAAPPGAPGPVAALHIVSGAPSPNPAGLVTPRTHISLSEVPPSEEEPQPEVPLGGLSEAADSLRELLRLPLRYPRALASLGLEVPRGVLLAGPPGVGKTQLVRAVARETGAELLAVSAPALQGARPGETEENVRRIFKRARELASRRPTLLFLDEVDALCPRRGGPHQAPESRVVAQVLTLLDGIGEDREVVVVGSTNRPDALDPALRRPGRFDREVVIGTPTLRQRKAILQVITSKMPISGQVDLNLLAEMTVGYVGADLTALCREAAMQALLHSEKNQDNPTIDETDFLEAFKKIQPSSFRSVIGVTDIKPVGWEQIGGLEDVKLKLKQSIEWPLKFPREFVRMGLTQPKGVLLYGPPGCAKTTLVRALATSCRCSFVSVSGADLFSPFVGDSEKILSQVFRQARANTPAIVFLDEIDSILGSRSISRTECNVQDRVLSVLLNELDGVGLKTIERRGSKSDQHGKCKQLEKNEELEFQEIFNSNVIVVAATNRPDVLDDALLRPGRLDKIIYIPPPDEKGRLSILKVCTKNTPMGPDVSLEKVAAETCFFSGADLGNLCKEAALLALQENGLEVTTVKQEHFLESLKTVKPSLSHKDLTLYKNLFQKKEFSILEDI</sequence>
<name>AFG2B_BOVIN</name>
<accession>A7YSY2</accession>
<feature type="chain" id="PRO_0000330585" description="ATPase family gene 2 protein homolog B">
    <location>
        <begin position="1"/>
        <end position="767"/>
    </location>
</feature>
<feature type="binding site" evidence="4">
    <location>
        <begin position="241"/>
        <end position="248"/>
    </location>
    <ligand>
        <name>ATP</name>
        <dbReference type="ChEBI" id="CHEBI:30616"/>
        <label>1</label>
    </ligand>
</feature>
<feature type="binding site" evidence="4">
    <location>
        <begin position="507"/>
        <end position="514"/>
    </location>
    <ligand>
        <name>ATP</name>
        <dbReference type="ChEBI" id="CHEBI:30616"/>
        <label>2</label>
    </ligand>
</feature>
<feature type="modified residue" description="N-acetylmethionine" evidence="3">
    <location>
        <position position="1"/>
    </location>
</feature>
<gene>
    <name type="primary">AFG2B</name>
    <name type="synonym">SPATA5L1</name>
</gene>